<sequence length="545" mass="61731">VLLLAIVSLVKSDQICIGYHANNSTEQVDTIMEKNVTVTHAQDILEKTHNGKLCDLDGVKPLILRDCSVAGWLLGNPMCDEFINVPEWSYIVERASPANDLCYPGDFNDYEELKHLLSRINHFEKIQIFPKSSWPNHEASSGVSSACPYQGRSSFFRNVVWLIKKNSAYPTIKRSYNNTNQEDLLVLWGIHHPNDAAEQTKLYQNPTTYISVGTSTLNQRLVPKIATRSKVNGQSGRMEFFWTILKPNDAINFESNGNFIAPEYAYKIVKKGDSAIMKSELEYGNCNTKCQTPMGAINSSMPFHNIHPLTIGECPKYVKSNRLVLATGLRNSPQREIRRKKRGLFGAIAGFIEGGWQGMVDGWYGYHHSNEQGSGYAADKESTQKAIDGVTNKVNSIIDKMNTQFEAVGREFNNLERRIENLNKKMEDGFLDVWTYNAELLVLMENERTLDFHDSNVKNLYDKVRLQLRDNAKELGNGCFEFYHKCDNECMESVKNGTYDYPHYSEEARLNREEISGVKLESIGTYQILSIYSTVASSLALAIMV</sequence>
<keyword id="KW-1167">Clathrin- and caveolin-independent endocytosis of virus by host</keyword>
<keyword id="KW-1165">Clathrin-mediated endocytosis of virus by host</keyword>
<keyword id="KW-1015">Disulfide bond</keyword>
<keyword id="KW-1170">Fusion of virus membrane with host endosomal membrane</keyword>
<keyword id="KW-1168">Fusion of virus membrane with host membrane</keyword>
<keyword id="KW-0325">Glycoprotein</keyword>
<keyword id="KW-0348">Hemagglutinin</keyword>
<keyword id="KW-1032">Host cell membrane</keyword>
<keyword id="KW-1043">Host membrane</keyword>
<keyword id="KW-0945">Host-virus interaction</keyword>
<keyword id="KW-0449">Lipoprotein</keyword>
<keyword id="KW-0472">Membrane</keyword>
<keyword id="KW-0564">Palmitate</keyword>
<keyword id="KW-0732">Signal</keyword>
<keyword id="KW-0812">Transmembrane</keyword>
<keyword id="KW-1133">Transmembrane helix</keyword>
<keyword id="KW-1161">Viral attachment to host cell</keyword>
<keyword id="KW-0261">Viral envelope protein</keyword>
<keyword id="KW-1162">Viral penetration into host cytoplasm</keyword>
<keyword id="KW-0946">Virion</keyword>
<keyword id="KW-1164">Virus endocytosis by host</keyword>
<keyword id="KW-1160">Virus entry into host cell</keyword>
<name>HEMA_I02A7</name>
<protein>
    <recommendedName>
        <fullName evidence="1">Hemagglutinin</fullName>
    </recommendedName>
    <component>
        <recommendedName>
            <fullName evidence="1">Hemagglutinin HA1 chain</fullName>
        </recommendedName>
    </component>
    <component>
        <recommendedName>
            <fullName evidence="1">Hemagglutinin HA2 chain</fullName>
        </recommendedName>
    </component>
</protein>
<proteinExistence type="inferred from homology"/>
<evidence type="ECO:0000255" key="1">
    <source>
        <dbReference type="HAMAP-Rule" id="MF_04072"/>
    </source>
</evidence>
<comment type="function">
    <text evidence="1">Binds to sialic acid-containing receptors on the cell surface, bringing about the attachment of the virus particle to the cell. This attachment induces virion internalization either through clathrin-dependent endocytosis or through clathrin- and caveolin-independent pathway. Plays a major role in the determination of host range restriction and virulence. Class I viral fusion protein. Responsible for penetration of the virus into the cell cytoplasm by mediating the fusion of the membrane of the endocytosed virus particle with the endosomal membrane. Low pH in endosomes induces an irreversible conformational change in HA2, releasing the fusion hydrophobic peptide. Several trimers are required to form a competent fusion pore.</text>
</comment>
<comment type="subunit">
    <text evidence="1">Homotrimer of disulfide-linked HA1-HA2.</text>
</comment>
<comment type="subcellular location">
    <subcellularLocation>
        <location evidence="1">Virion membrane</location>
        <topology evidence="1">Single-pass type I membrane protein</topology>
    </subcellularLocation>
    <subcellularLocation>
        <location evidence="1">Host apical cell membrane</location>
        <topology evidence="1">Single-pass type I membrane protein</topology>
    </subcellularLocation>
    <text evidence="1">Targeted to the apical plasma membrane in epithelial polarized cells through a signal present in the transmembrane domain. Associated with glycosphingolipid- and cholesterol-enriched detergent-resistant lipid rafts.</text>
</comment>
<comment type="PTM">
    <text evidence="1">Palmitoylated.</text>
</comment>
<comment type="PTM">
    <text evidence="1">In natural infection, inactive HA is matured into HA1 and HA2 outside the cell by one or more trypsin-like, arginine-specific endoprotease secreted by the bronchial epithelial cells. One identified protease that may be involved in this process is secreted in lungs by club cells.</text>
</comment>
<comment type="miscellaneous">
    <text>Major glycoprotein, comprises over 80% of the envelope proteins present in virus particle.</text>
</comment>
<comment type="miscellaneous">
    <text>The extent of infection into host organism is determined by HA. Influenza viruses bud from the apical surface of polarized epithelial cells (e.g. bronchial epithelial cells) into lumen of lungs and are therefore usually pneumotropic. The reason is that HA is cleaved by tryptase clara which is restricted to lungs. However, HAs of H5 and H7 pantropic avian viruses subtypes can be cleaved by furin and subtilisin-type enzymes, allowing the virus to grow in other organs than lungs.</text>
</comment>
<comment type="miscellaneous">
    <text>The influenza A genome consist of 8 RNA segments. Genetic variation of hemagglutinin and/or neuraminidase genes results in the emergence of new influenza strains. The mechanism of variation can be the result of point mutations or the result of genetic reassortment between segments of two different strains.</text>
</comment>
<comment type="similarity">
    <text evidence="1">Belongs to the influenza viruses hemagglutinin family.</text>
</comment>
<organism>
    <name type="scientific">Influenza A virus (strain A/Teal/China/2978.1/2002 H5N1 genotype W)</name>
    <dbReference type="NCBI Taxonomy" id="284215"/>
    <lineage>
        <taxon>Viruses</taxon>
        <taxon>Riboviria</taxon>
        <taxon>Orthornavirae</taxon>
        <taxon>Negarnaviricota</taxon>
        <taxon>Polyploviricotina</taxon>
        <taxon>Insthoviricetes</taxon>
        <taxon>Articulavirales</taxon>
        <taxon>Orthomyxoviridae</taxon>
        <taxon>Alphainfluenzavirus</taxon>
        <taxon>Alphainfluenzavirus influenzae</taxon>
        <taxon>Influenza A virus</taxon>
    </lineage>
</organism>
<accession>Q6DQ15</accession>
<reference key="1">
    <citation type="journal article" date="2004" name="Nature">
        <title>Genesis of a highly pathogenic and potentially pandemic H5N1 influenza virus in eastern Asia.</title>
        <authorList>
            <person name="Li K.S."/>
            <person name="Guan Y."/>
            <person name="Wang J."/>
            <person name="Smith G.J.D."/>
            <person name="Xu K.M."/>
            <person name="Duan L."/>
            <person name="Rahardjo A.P."/>
            <person name="Puthavathana P."/>
            <person name="Buranathai C."/>
            <person name="Nguyen T.D."/>
            <person name="Estoepangestie A.T.S."/>
            <person name="Chaisingh A."/>
            <person name="Auewarakul P."/>
            <person name="Long H.T."/>
            <person name="Hanh N.T.H."/>
            <person name="Webby R.J."/>
            <person name="Poon L.L.M."/>
            <person name="Chen H."/>
            <person name="Shortridge K.F."/>
            <person name="Yuen K.Y."/>
            <person name="Webster R.G."/>
            <person name="Peiris J.S.M."/>
        </authorList>
    </citation>
    <scope>NUCLEOTIDE SEQUENCE [GENOMIC RNA]</scope>
</reference>
<feature type="signal peptide" evidence="1">
    <location>
        <begin position="1"/>
        <end position="12"/>
    </location>
</feature>
<feature type="chain" id="PRO_0000440825" description="Hemagglutinin" evidence="1">
    <location>
        <begin position="13"/>
        <end position="545"/>
    </location>
</feature>
<feature type="chain" id="PRO_0000440826" description="Hemagglutinin HA1 chain" evidence="1">
    <location>
        <begin position="13"/>
        <end position="342"/>
    </location>
</feature>
<feature type="chain" id="PRO_0000440827" description="Hemagglutinin HA2 chain" evidence="1">
    <location>
        <begin position="343"/>
        <end position="545"/>
    </location>
</feature>
<feature type="site" description="Cleavage; by host" evidence="1">
    <location>
        <begin position="342"/>
        <end position="343"/>
    </location>
</feature>
<feature type="glycosylation site" description="N-linked (GlcNAc...) asparagine; by host" evidence="1">
    <location>
        <position position="22"/>
    </location>
</feature>
<feature type="glycosylation site" description="N-linked (GlcNAc...) asparagine; by host" evidence="1">
    <location>
        <position position="23"/>
    </location>
</feature>
<feature type="glycosylation site" description="N-linked (GlcNAc...) asparagine; by host" evidence="1">
    <location>
        <position position="35"/>
    </location>
</feature>
<feature type="glycosylation site" description="N-linked (GlcNAc...) asparagine; by host" evidence="1">
    <location>
        <position position="177"/>
    </location>
</feature>
<feature type="glycosylation site" description="N-linked (GlcNAc...) asparagine; by host" evidence="1">
    <location>
        <position position="298"/>
    </location>
</feature>
<feature type="glycosylation site" description="N-linked (GlcNAc...) asparagine; by host" evidence="1">
    <location>
        <position position="496"/>
    </location>
</feature>
<feature type="disulfide bond" description="Interchain (between HA1 and HA2 chains)" evidence="1">
    <location>
        <begin position="16"/>
        <end position="479"/>
    </location>
</feature>
<feature type="disulfide bond" evidence="1">
    <location>
        <begin position="54"/>
        <end position="286"/>
    </location>
</feature>
<feature type="disulfide bond" evidence="1">
    <location>
        <begin position="67"/>
        <end position="79"/>
    </location>
</feature>
<feature type="disulfide bond" evidence="1">
    <location>
        <begin position="102"/>
        <end position="147"/>
    </location>
</feature>
<feature type="disulfide bond" evidence="1">
    <location>
        <begin position="290"/>
        <end position="314"/>
    </location>
</feature>
<feature type="disulfide bond" evidence="1">
    <location>
        <begin position="486"/>
        <end position="490"/>
    </location>
</feature>
<feature type="non-terminal residue">
    <location>
        <position position="1"/>
    </location>
</feature>
<feature type="non-terminal residue">
    <location>
        <position position="545"/>
    </location>
</feature>
<gene>
    <name evidence="1" type="primary">HA</name>
</gene>
<organismHost>
    <name type="scientific">Aves</name>
    <dbReference type="NCBI Taxonomy" id="8782"/>
</organismHost>
<organismHost>
    <name type="scientific">Felis catus</name>
    <name type="common">Cat</name>
    <name type="synonym">Felis silvestris catus</name>
    <dbReference type="NCBI Taxonomy" id="9685"/>
</organismHost>
<organismHost>
    <name type="scientific">Homo sapiens</name>
    <name type="common">Human</name>
    <dbReference type="NCBI Taxonomy" id="9606"/>
</organismHost>
<organismHost>
    <name type="scientific">Panthera pardus</name>
    <name type="common">Leopard</name>
    <name type="synonym">Felis pardus</name>
    <dbReference type="NCBI Taxonomy" id="9691"/>
</organismHost>
<organismHost>
    <name type="scientific">Panthera tigris</name>
    <name type="common">Tiger</name>
    <dbReference type="NCBI Taxonomy" id="9694"/>
</organismHost>
<organismHost>
    <name type="scientific">Sus scrofa</name>
    <name type="common">Pig</name>
    <dbReference type="NCBI Taxonomy" id="9823"/>
</organismHost>
<dbReference type="EMBL" id="AY651352">
    <property type="protein sequence ID" value="AAT73292.1"/>
    <property type="molecule type" value="Genomic_RNA"/>
</dbReference>
<dbReference type="SMR" id="Q6DQ15"/>
<dbReference type="GlyCosmos" id="Q6DQ15">
    <property type="glycosylation" value="6 sites, No reported glycans"/>
</dbReference>
<dbReference type="GO" id="GO:0020002">
    <property type="term" value="C:host cell plasma membrane"/>
    <property type="evidence" value="ECO:0007669"/>
    <property type="project" value="UniProtKB-SubCell"/>
</dbReference>
<dbReference type="GO" id="GO:0016020">
    <property type="term" value="C:membrane"/>
    <property type="evidence" value="ECO:0007669"/>
    <property type="project" value="UniProtKB-KW"/>
</dbReference>
<dbReference type="GO" id="GO:0019031">
    <property type="term" value="C:viral envelope"/>
    <property type="evidence" value="ECO:0007669"/>
    <property type="project" value="UniProtKB-KW"/>
</dbReference>
<dbReference type="GO" id="GO:0055036">
    <property type="term" value="C:virion membrane"/>
    <property type="evidence" value="ECO:0007669"/>
    <property type="project" value="UniProtKB-SubCell"/>
</dbReference>
<dbReference type="GO" id="GO:0046789">
    <property type="term" value="F:host cell surface receptor binding"/>
    <property type="evidence" value="ECO:0007669"/>
    <property type="project" value="InterPro"/>
</dbReference>
<dbReference type="GO" id="GO:0075512">
    <property type="term" value="P:clathrin-dependent endocytosis of virus by host cell"/>
    <property type="evidence" value="ECO:0007669"/>
    <property type="project" value="UniProtKB-KW"/>
</dbReference>
<dbReference type="GO" id="GO:0039654">
    <property type="term" value="P:fusion of virus membrane with host endosome membrane"/>
    <property type="evidence" value="ECO:0007669"/>
    <property type="project" value="UniProtKB-KW"/>
</dbReference>
<dbReference type="GO" id="GO:0019064">
    <property type="term" value="P:fusion of virus membrane with host plasma membrane"/>
    <property type="evidence" value="ECO:0007669"/>
    <property type="project" value="InterPro"/>
</dbReference>
<dbReference type="GO" id="GO:0019062">
    <property type="term" value="P:virion attachment to host cell"/>
    <property type="evidence" value="ECO:0007669"/>
    <property type="project" value="UniProtKB-KW"/>
</dbReference>
<dbReference type="FunFam" id="3.90.209.20:FF:000001">
    <property type="entry name" value="Hemagglutinin"/>
    <property type="match status" value="1"/>
</dbReference>
<dbReference type="Gene3D" id="3.90.20.10">
    <property type="match status" value="1"/>
</dbReference>
<dbReference type="Gene3D" id="3.90.209.20">
    <property type="match status" value="1"/>
</dbReference>
<dbReference type="Gene3D" id="2.10.77.10">
    <property type="entry name" value="Hemagglutinin Chain A, Domain 2"/>
    <property type="match status" value="1"/>
</dbReference>
<dbReference type="HAMAP" id="MF_04072">
    <property type="entry name" value="INFV_HEMA"/>
    <property type="match status" value="1"/>
</dbReference>
<dbReference type="InterPro" id="IPR008980">
    <property type="entry name" value="Capsid_hemagglutn"/>
</dbReference>
<dbReference type="InterPro" id="IPR013828">
    <property type="entry name" value="Hemagglutn_HA1_a/b_dom_sf"/>
</dbReference>
<dbReference type="InterPro" id="IPR000149">
    <property type="entry name" value="Hemagglutn_influenz_A"/>
</dbReference>
<dbReference type="InterPro" id="IPR001364">
    <property type="entry name" value="Hemagglutn_influenz_A/B"/>
</dbReference>
<dbReference type="Pfam" id="PF00509">
    <property type="entry name" value="Hemagglutinin"/>
    <property type="match status" value="1"/>
</dbReference>
<dbReference type="PRINTS" id="PR00330">
    <property type="entry name" value="HEMAGGLUTN1"/>
</dbReference>
<dbReference type="PRINTS" id="PR00329">
    <property type="entry name" value="HEMAGGLUTN12"/>
</dbReference>
<dbReference type="SUPFAM" id="SSF58064">
    <property type="entry name" value="Influenza hemagglutinin (stalk)"/>
    <property type="match status" value="1"/>
</dbReference>
<dbReference type="SUPFAM" id="SSF49818">
    <property type="entry name" value="Viral protein domain"/>
    <property type="match status" value="1"/>
</dbReference>